<dbReference type="EC" id="2.5.1.54"/>
<dbReference type="EMBL" id="L48616">
    <property type="protein sequence ID" value="AAC18902.1"/>
    <property type="molecule type" value="Genomic_DNA"/>
</dbReference>
<dbReference type="RefSeq" id="WP_043050172.1">
    <property type="nucleotide sequence ID" value="NZ_JXCQ01000041.1"/>
</dbReference>
<dbReference type="SMR" id="Q51789"/>
<dbReference type="UniPathway" id="UPA00099"/>
<dbReference type="GO" id="GO:0003849">
    <property type="term" value="F:3-deoxy-7-phosphoheptulonate synthase activity"/>
    <property type="evidence" value="ECO:0007669"/>
    <property type="project" value="UniProtKB-EC"/>
</dbReference>
<dbReference type="GO" id="GO:0009073">
    <property type="term" value="P:aromatic amino acid family biosynthetic process"/>
    <property type="evidence" value="ECO:0007669"/>
    <property type="project" value="InterPro"/>
</dbReference>
<dbReference type="GO" id="GO:0002047">
    <property type="term" value="P:phenazine biosynthetic process"/>
    <property type="evidence" value="ECO:0007669"/>
    <property type="project" value="UniProtKB-UniPathway"/>
</dbReference>
<dbReference type="Gene3D" id="3.20.20.70">
    <property type="entry name" value="Aldolase class I"/>
    <property type="match status" value="1"/>
</dbReference>
<dbReference type="InterPro" id="IPR013785">
    <property type="entry name" value="Aldolase_TIM"/>
</dbReference>
<dbReference type="InterPro" id="IPR002480">
    <property type="entry name" value="DAHP_synth_2"/>
</dbReference>
<dbReference type="PANTHER" id="PTHR21337:SF0">
    <property type="entry name" value="PHOSPHO-2-DEHYDRO-3-DEOXYHEPTONATE ALDOLASE"/>
    <property type="match status" value="1"/>
</dbReference>
<dbReference type="PANTHER" id="PTHR21337">
    <property type="entry name" value="PHOSPHO-2-DEHYDRO-3-DEOXYHEPTONATE ALDOLASE 1, 2"/>
    <property type="match status" value="1"/>
</dbReference>
<dbReference type="Pfam" id="PF01474">
    <property type="entry name" value="DAHP_synth_2"/>
    <property type="match status" value="1"/>
</dbReference>
<dbReference type="SUPFAM" id="SSF51569">
    <property type="entry name" value="Aldolase"/>
    <property type="match status" value="1"/>
</dbReference>
<name>PHZC_PSEFL</name>
<keyword id="KW-0045">Antibiotic biosynthesis</keyword>
<keyword id="KW-0808">Transferase</keyword>
<keyword id="KW-0843">Virulence</keyword>
<sequence>MEDLLKRVLKCEALQQPQWSEPSQLHDAQAYLRDSASLIRVEDILVLRATLARVAAGEAMIIQCGDCAEDMDESAADHVTRKAALLDMLAGTFRLVTQQPVVRVGRIAGQFAKPRSNHSERIGDVELPVYRGDMVNGRDAVLGHRQHDAQRLVRGYRAAQDIMQHLGWKEPSGQEQLTGSPAWTSHEMLVLDYELPQVRRDEQGRTFLGSTHWPWIGERTRQLTGAHVALLSEVLNPVACKVGPDITQDQLLSLCERLDPRREPGRLTLIARMGAHKVADRLPPLVEAVRRAGHKIIWLSDPMHGNTIVAPCGNKTRMVQTITDEITAFKHAVVSAGGVAGGLHLETTPDDVSECASDAAGLGQVGSHYKSLCDPRLNPWQAITAVMAWKACPPPSFVSL</sequence>
<organism>
    <name type="scientific">Pseudomonas fluorescens</name>
    <dbReference type="NCBI Taxonomy" id="294"/>
    <lineage>
        <taxon>Bacteria</taxon>
        <taxon>Pseudomonadati</taxon>
        <taxon>Pseudomonadota</taxon>
        <taxon>Gammaproteobacteria</taxon>
        <taxon>Pseudomonadales</taxon>
        <taxon>Pseudomonadaceae</taxon>
        <taxon>Pseudomonas</taxon>
    </lineage>
</organism>
<reference key="1">
    <citation type="journal article" date="1998" name="J. Bacteriol.">
        <title>A seven-gene locus for synthesis of phenazine-1-carboxylic acid by Pseudomonas fluorescens 2-79.</title>
        <authorList>
            <person name="Mavrodi D.V."/>
            <person name="Ksenzenko V.N."/>
            <person name="Bonsall R.F."/>
            <person name="Cook R.J."/>
            <person name="Boronin A.M."/>
            <person name="Thomashow L.S."/>
        </authorList>
    </citation>
    <scope>NUCLEOTIDE SEQUENCE [GENOMIC DNA]</scope>
    <source>
        <strain>NRRL B-15132 / 2-79</strain>
    </source>
</reference>
<evidence type="ECO:0000305" key="1"/>
<comment type="catalytic activity">
    <reaction>
        <text>D-erythrose 4-phosphate + phosphoenolpyruvate + H2O = 7-phospho-2-dehydro-3-deoxy-D-arabino-heptonate + phosphate</text>
        <dbReference type="Rhea" id="RHEA:14717"/>
        <dbReference type="ChEBI" id="CHEBI:15377"/>
        <dbReference type="ChEBI" id="CHEBI:16897"/>
        <dbReference type="ChEBI" id="CHEBI:43474"/>
        <dbReference type="ChEBI" id="CHEBI:58394"/>
        <dbReference type="ChEBI" id="CHEBI:58702"/>
        <dbReference type="EC" id="2.5.1.54"/>
    </reaction>
</comment>
<comment type="pathway">
    <text>Antibiotic biosynthesis; phenazine biosynthesis.</text>
</comment>
<comment type="similarity">
    <text evidence="1">Belongs to the class-II DAHP synthase family.</text>
</comment>
<gene>
    <name type="primary">phzC</name>
</gene>
<protein>
    <recommendedName>
        <fullName>Probable phospho-2-dehydro-3-deoxyheptonate aldolase</fullName>
        <ecNumber>2.5.1.54</ecNumber>
    </recommendedName>
    <alternativeName>
        <fullName>3-deoxy-D-arabino-heptulosonate 7-phosphate synthase</fullName>
    </alternativeName>
    <alternativeName>
        <fullName>DAHP synthase</fullName>
    </alternativeName>
    <alternativeName>
        <fullName>Phospho-2-keto-3-deoxyheptonate aldolase</fullName>
    </alternativeName>
</protein>
<feature type="chain" id="PRO_0000140858" description="Probable phospho-2-dehydro-3-deoxyheptonate aldolase">
    <location>
        <begin position="1"/>
        <end position="400"/>
    </location>
</feature>
<accession>Q51789</accession>
<proteinExistence type="inferred from homology"/>